<evidence type="ECO:0000255" key="1">
    <source>
        <dbReference type="HAMAP-Rule" id="MF_00161"/>
    </source>
</evidence>
<feature type="chain" id="PRO_1000123492" description="Lipoprotein signal peptidase">
    <location>
        <begin position="1"/>
        <end position="160"/>
    </location>
</feature>
<feature type="transmembrane region" description="Helical" evidence="1">
    <location>
        <begin position="13"/>
        <end position="33"/>
    </location>
</feature>
<feature type="transmembrane region" description="Helical" evidence="1">
    <location>
        <begin position="72"/>
        <end position="92"/>
    </location>
</feature>
<feature type="transmembrane region" description="Helical" evidence="1">
    <location>
        <begin position="104"/>
        <end position="124"/>
    </location>
</feature>
<feature type="transmembrane region" description="Helical" evidence="1">
    <location>
        <begin position="134"/>
        <end position="154"/>
    </location>
</feature>
<feature type="active site" evidence="1">
    <location>
        <position position="125"/>
    </location>
</feature>
<feature type="active site" evidence="1">
    <location>
        <position position="143"/>
    </location>
</feature>
<sequence>MKQKYSKKSKKWIYITTIIFILILDISSKHLIIKYIKTYDTKKIFSVLNFFHVHNHGAAFSFLSDQNGWQKWFLSTVSILTILVMTRIITKLKKQETKKITAYSLIIAGATGNLIDRIFYGFVVDFIDIHINDWHFATFNIADCSIFIGIIILMRINYST</sequence>
<dbReference type="EC" id="3.4.23.36" evidence="1"/>
<dbReference type="EMBL" id="CP001158">
    <property type="protein sequence ID" value="ACL29968.1"/>
    <property type="molecule type" value="Genomic_DNA"/>
</dbReference>
<dbReference type="RefSeq" id="WP_012619451.1">
    <property type="nucleotide sequence ID" value="NC_011834.1"/>
</dbReference>
<dbReference type="SMR" id="B8D753"/>
<dbReference type="KEGG" id="bau:BUAPTUC7_147"/>
<dbReference type="HOGENOM" id="CLU_083252_4_0_6"/>
<dbReference type="UniPathway" id="UPA00665"/>
<dbReference type="GO" id="GO:0005886">
    <property type="term" value="C:plasma membrane"/>
    <property type="evidence" value="ECO:0007669"/>
    <property type="project" value="UniProtKB-SubCell"/>
</dbReference>
<dbReference type="GO" id="GO:0004190">
    <property type="term" value="F:aspartic-type endopeptidase activity"/>
    <property type="evidence" value="ECO:0007669"/>
    <property type="project" value="UniProtKB-UniRule"/>
</dbReference>
<dbReference type="GO" id="GO:0006508">
    <property type="term" value="P:proteolysis"/>
    <property type="evidence" value="ECO:0007669"/>
    <property type="project" value="UniProtKB-KW"/>
</dbReference>
<dbReference type="HAMAP" id="MF_00161">
    <property type="entry name" value="LspA"/>
    <property type="match status" value="1"/>
</dbReference>
<dbReference type="InterPro" id="IPR001872">
    <property type="entry name" value="Peptidase_A8"/>
</dbReference>
<dbReference type="NCBIfam" id="TIGR00077">
    <property type="entry name" value="lspA"/>
    <property type="match status" value="1"/>
</dbReference>
<dbReference type="PANTHER" id="PTHR33695">
    <property type="entry name" value="LIPOPROTEIN SIGNAL PEPTIDASE"/>
    <property type="match status" value="1"/>
</dbReference>
<dbReference type="PANTHER" id="PTHR33695:SF1">
    <property type="entry name" value="LIPOPROTEIN SIGNAL PEPTIDASE"/>
    <property type="match status" value="1"/>
</dbReference>
<dbReference type="Pfam" id="PF01252">
    <property type="entry name" value="Peptidase_A8"/>
    <property type="match status" value="1"/>
</dbReference>
<dbReference type="PRINTS" id="PR00781">
    <property type="entry name" value="LIPOSIGPTASE"/>
</dbReference>
<dbReference type="PROSITE" id="PS00855">
    <property type="entry name" value="SPASE_II"/>
    <property type="match status" value="1"/>
</dbReference>
<gene>
    <name evidence="1" type="primary">lspA</name>
    <name type="ordered locus">BUAPTUC7_147</name>
</gene>
<name>LSPA_BUCAT</name>
<organism>
    <name type="scientific">Buchnera aphidicola subsp. Acyrthosiphon pisum (strain Tuc7)</name>
    <dbReference type="NCBI Taxonomy" id="561501"/>
    <lineage>
        <taxon>Bacteria</taxon>
        <taxon>Pseudomonadati</taxon>
        <taxon>Pseudomonadota</taxon>
        <taxon>Gammaproteobacteria</taxon>
        <taxon>Enterobacterales</taxon>
        <taxon>Erwiniaceae</taxon>
        <taxon>Buchnera</taxon>
    </lineage>
</organism>
<keyword id="KW-0064">Aspartyl protease</keyword>
<keyword id="KW-0997">Cell inner membrane</keyword>
<keyword id="KW-1003">Cell membrane</keyword>
<keyword id="KW-0378">Hydrolase</keyword>
<keyword id="KW-0472">Membrane</keyword>
<keyword id="KW-0645">Protease</keyword>
<keyword id="KW-0812">Transmembrane</keyword>
<keyword id="KW-1133">Transmembrane helix</keyword>
<reference key="1">
    <citation type="journal article" date="2009" name="Science">
        <title>The dynamics and time scale of ongoing genomic erosion in symbiotic bacteria.</title>
        <authorList>
            <person name="Moran N.A."/>
            <person name="McLaughlin H.J."/>
            <person name="Sorek R."/>
        </authorList>
    </citation>
    <scope>NUCLEOTIDE SEQUENCE [LARGE SCALE GENOMIC DNA]</scope>
    <source>
        <strain>Tuc7</strain>
    </source>
</reference>
<accession>B8D753</accession>
<proteinExistence type="inferred from homology"/>
<comment type="function">
    <text evidence="1">This protein specifically catalyzes the removal of signal peptides from prolipoproteins.</text>
</comment>
<comment type="catalytic activity">
    <reaction evidence="1">
        <text>Release of signal peptides from bacterial membrane prolipoproteins. Hydrolyzes -Xaa-Yaa-Zaa-|-(S,diacylglyceryl)Cys-, in which Xaa is hydrophobic (preferably Leu), and Yaa (Ala or Ser) and Zaa (Gly or Ala) have small, neutral side chains.</text>
        <dbReference type="EC" id="3.4.23.36"/>
    </reaction>
</comment>
<comment type="pathway">
    <text evidence="1">Protein modification; lipoprotein biosynthesis (signal peptide cleavage).</text>
</comment>
<comment type="subcellular location">
    <subcellularLocation>
        <location evidence="1">Cell inner membrane</location>
        <topology evidence="1">Multi-pass membrane protein</topology>
    </subcellularLocation>
</comment>
<comment type="similarity">
    <text evidence="1">Belongs to the peptidase A8 family.</text>
</comment>
<protein>
    <recommendedName>
        <fullName evidence="1">Lipoprotein signal peptidase</fullName>
        <ecNumber evidence="1">3.4.23.36</ecNumber>
    </recommendedName>
    <alternativeName>
        <fullName evidence="1">Prolipoprotein signal peptidase</fullName>
    </alternativeName>
    <alternativeName>
        <fullName evidence="1">Signal peptidase II</fullName>
        <shortName evidence="1">SPase II</shortName>
    </alternativeName>
</protein>